<proteinExistence type="inferred from homology"/>
<comment type="function">
    <text evidence="1">The alpha subunit is responsible for the aldol cleavage of indoleglycerol phosphate to indole and glyceraldehyde 3-phosphate.</text>
</comment>
<comment type="catalytic activity">
    <reaction evidence="1">
        <text>(1S,2R)-1-C-(indol-3-yl)glycerol 3-phosphate + L-serine = D-glyceraldehyde 3-phosphate + L-tryptophan + H2O</text>
        <dbReference type="Rhea" id="RHEA:10532"/>
        <dbReference type="ChEBI" id="CHEBI:15377"/>
        <dbReference type="ChEBI" id="CHEBI:33384"/>
        <dbReference type="ChEBI" id="CHEBI:57912"/>
        <dbReference type="ChEBI" id="CHEBI:58866"/>
        <dbReference type="ChEBI" id="CHEBI:59776"/>
        <dbReference type="EC" id="4.2.1.20"/>
    </reaction>
</comment>
<comment type="pathway">
    <text evidence="1">Amino-acid biosynthesis; L-tryptophan biosynthesis; L-tryptophan from chorismate: step 5/5.</text>
</comment>
<comment type="subunit">
    <text evidence="1">Tetramer of two alpha and two beta chains.</text>
</comment>
<comment type="similarity">
    <text evidence="1">Belongs to the TrpA family.</text>
</comment>
<name>TRPA_ECOSM</name>
<organism>
    <name type="scientific">Escherichia coli (strain SMS-3-5 / SECEC)</name>
    <dbReference type="NCBI Taxonomy" id="439855"/>
    <lineage>
        <taxon>Bacteria</taxon>
        <taxon>Pseudomonadati</taxon>
        <taxon>Pseudomonadota</taxon>
        <taxon>Gammaproteobacteria</taxon>
        <taxon>Enterobacterales</taxon>
        <taxon>Enterobacteriaceae</taxon>
        <taxon>Escherichia</taxon>
    </lineage>
</organism>
<gene>
    <name evidence="1" type="primary">trpA</name>
    <name type="ordered locus">EcSMS35_1872</name>
</gene>
<reference key="1">
    <citation type="journal article" date="2008" name="J. Bacteriol.">
        <title>Insights into the environmental resistance gene pool from the genome sequence of the multidrug-resistant environmental isolate Escherichia coli SMS-3-5.</title>
        <authorList>
            <person name="Fricke W.F."/>
            <person name="Wright M.S."/>
            <person name="Lindell A.H."/>
            <person name="Harkins D.M."/>
            <person name="Baker-Austin C."/>
            <person name="Ravel J."/>
            <person name="Stepanauskas R."/>
        </authorList>
    </citation>
    <scope>NUCLEOTIDE SEQUENCE [LARGE SCALE GENOMIC DNA]</scope>
    <source>
        <strain>SMS-3-5 / SECEC</strain>
    </source>
</reference>
<accession>B1LH32</accession>
<feature type="chain" id="PRO_1000117740" description="Tryptophan synthase alpha chain">
    <location>
        <begin position="1"/>
        <end position="268"/>
    </location>
</feature>
<feature type="active site" description="Proton acceptor" evidence="1">
    <location>
        <position position="49"/>
    </location>
</feature>
<feature type="active site" description="Proton acceptor" evidence="1">
    <location>
        <position position="60"/>
    </location>
</feature>
<dbReference type="EC" id="4.2.1.20" evidence="1"/>
<dbReference type="EMBL" id="CP000970">
    <property type="protein sequence ID" value="ACB18679.1"/>
    <property type="molecule type" value="Genomic_DNA"/>
</dbReference>
<dbReference type="RefSeq" id="WP_000443094.1">
    <property type="nucleotide sequence ID" value="NC_010498.1"/>
</dbReference>
<dbReference type="SMR" id="B1LH32"/>
<dbReference type="KEGG" id="ecm:EcSMS35_1872"/>
<dbReference type="HOGENOM" id="CLU_016734_0_4_6"/>
<dbReference type="UniPathway" id="UPA00035">
    <property type="reaction ID" value="UER00044"/>
</dbReference>
<dbReference type="Proteomes" id="UP000007011">
    <property type="component" value="Chromosome"/>
</dbReference>
<dbReference type="GO" id="GO:0005829">
    <property type="term" value="C:cytosol"/>
    <property type="evidence" value="ECO:0007669"/>
    <property type="project" value="TreeGrafter"/>
</dbReference>
<dbReference type="GO" id="GO:0004834">
    <property type="term" value="F:tryptophan synthase activity"/>
    <property type="evidence" value="ECO:0007669"/>
    <property type="project" value="UniProtKB-UniRule"/>
</dbReference>
<dbReference type="CDD" id="cd04724">
    <property type="entry name" value="Tryptophan_synthase_alpha"/>
    <property type="match status" value="1"/>
</dbReference>
<dbReference type="FunFam" id="3.20.20.70:FF:000037">
    <property type="entry name" value="Tryptophan synthase alpha chain"/>
    <property type="match status" value="1"/>
</dbReference>
<dbReference type="Gene3D" id="3.20.20.70">
    <property type="entry name" value="Aldolase class I"/>
    <property type="match status" value="1"/>
</dbReference>
<dbReference type="HAMAP" id="MF_00131">
    <property type="entry name" value="Trp_synth_alpha"/>
    <property type="match status" value="1"/>
</dbReference>
<dbReference type="InterPro" id="IPR013785">
    <property type="entry name" value="Aldolase_TIM"/>
</dbReference>
<dbReference type="InterPro" id="IPR011060">
    <property type="entry name" value="RibuloseP-bd_barrel"/>
</dbReference>
<dbReference type="InterPro" id="IPR018204">
    <property type="entry name" value="Trp_synthase_alpha_AS"/>
</dbReference>
<dbReference type="InterPro" id="IPR002028">
    <property type="entry name" value="Trp_synthase_suA"/>
</dbReference>
<dbReference type="NCBIfam" id="TIGR00262">
    <property type="entry name" value="trpA"/>
    <property type="match status" value="1"/>
</dbReference>
<dbReference type="PANTHER" id="PTHR43406:SF1">
    <property type="entry name" value="TRYPTOPHAN SYNTHASE ALPHA CHAIN, CHLOROPLASTIC"/>
    <property type="match status" value="1"/>
</dbReference>
<dbReference type="PANTHER" id="PTHR43406">
    <property type="entry name" value="TRYPTOPHAN SYNTHASE, ALPHA CHAIN"/>
    <property type="match status" value="1"/>
</dbReference>
<dbReference type="Pfam" id="PF00290">
    <property type="entry name" value="Trp_syntA"/>
    <property type="match status" value="1"/>
</dbReference>
<dbReference type="SUPFAM" id="SSF51366">
    <property type="entry name" value="Ribulose-phoshate binding barrel"/>
    <property type="match status" value="1"/>
</dbReference>
<dbReference type="PROSITE" id="PS00167">
    <property type="entry name" value="TRP_SYNTHASE_ALPHA"/>
    <property type="match status" value="1"/>
</dbReference>
<keyword id="KW-0028">Amino-acid biosynthesis</keyword>
<keyword id="KW-0057">Aromatic amino acid biosynthesis</keyword>
<keyword id="KW-0456">Lyase</keyword>
<keyword id="KW-0822">Tryptophan biosynthesis</keyword>
<protein>
    <recommendedName>
        <fullName evidence="1">Tryptophan synthase alpha chain</fullName>
        <ecNumber evidence="1">4.2.1.20</ecNumber>
    </recommendedName>
</protein>
<evidence type="ECO:0000255" key="1">
    <source>
        <dbReference type="HAMAP-Rule" id="MF_00131"/>
    </source>
</evidence>
<sequence length="268" mass="28696">MERYESLFARLKERKEGAFVPFVTLGDPGIEQSLKIIDALIEAGADALELGIPFSDPLADGPTIQNATLRAFAAGVTPAQCFEMLALIRQKHPTIPIGLLMYANLVFNKGIDEFYAQCEKAGVDSVLVADVPVEESAPFRQAALRHNVAPIFICPPNADDDLLRQIASYGRGYTYLLSRAGVTGAENRAALPLNHLVTKLKEYNAAPPLQGFGISAPDQVKAAIDAGAAGAISGSAIVKIIEQHINEPEKMLAALKAFVQPMKAATRS</sequence>